<organism>
    <name type="scientific">Rattus norvegicus</name>
    <name type="common">Rat</name>
    <dbReference type="NCBI Taxonomy" id="10116"/>
    <lineage>
        <taxon>Eukaryota</taxon>
        <taxon>Metazoa</taxon>
        <taxon>Chordata</taxon>
        <taxon>Craniata</taxon>
        <taxon>Vertebrata</taxon>
        <taxon>Euteleostomi</taxon>
        <taxon>Mammalia</taxon>
        <taxon>Eutheria</taxon>
        <taxon>Euarchontoglires</taxon>
        <taxon>Glires</taxon>
        <taxon>Rodentia</taxon>
        <taxon>Myomorpha</taxon>
        <taxon>Muroidea</taxon>
        <taxon>Muridae</taxon>
        <taxon>Murinae</taxon>
        <taxon>Rattus</taxon>
    </lineage>
</organism>
<dbReference type="EMBL" id="AB036792">
    <property type="protein sequence ID" value="BAB20440.1"/>
    <property type="molecule type" value="mRNA"/>
</dbReference>
<dbReference type="EMBL" id="BC088123">
    <property type="protein sequence ID" value="AAH88123.1"/>
    <property type="molecule type" value="mRNA"/>
</dbReference>
<dbReference type="RefSeq" id="NP_446086.1">
    <property type="nucleotide sequence ID" value="NM_053634.1"/>
</dbReference>
<dbReference type="SMR" id="P57756"/>
<dbReference type="FunCoup" id="P57756">
    <property type="interactions" value="28"/>
</dbReference>
<dbReference type="STRING" id="10116.ENSRNOP00000012494"/>
<dbReference type="GlyCosmos" id="P57756">
    <property type="glycosylation" value="1 site, No reported glycans"/>
</dbReference>
<dbReference type="GlyGen" id="P57756">
    <property type="glycosylation" value="2 sites"/>
</dbReference>
<dbReference type="PaxDb" id="10116-ENSRNOP00000012494"/>
<dbReference type="Ensembl" id="ENSRNOT00000012494.7">
    <property type="protein sequence ID" value="ENSRNOP00000012494.3"/>
    <property type="gene ID" value="ENSRNOG00000009342.7"/>
</dbReference>
<dbReference type="GeneID" id="114091"/>
<dbReference type="KEGG" id="rno:114091"/>
<dbReference type="UCSC" id="RGD:621222">
    <property type="organism name" value="rat"/>
</dbReference>
<dbReference type="AGR" id="RGD:621222"/>
<dbReference type="CTD" id="14134"/>
<dbReference type="RGD" id="621222">
    <property type="gene designation" value="Fcnb"/>
</dbReference>
<dbReference type="eggNOG" id="KOG2579">
    <property type="taxonomic scope" value="Eukaryota"/>
</dbReference>
<dbReference type="GeneTree" id="ENSGT00940000157531"/>
<dbReference type="HOGENOM" id="CLU_038628_3_3_1"/>
<dbReference type="InParanoid" id="P57756"/>
<dbReference type="OMA" id="ANECENY"/>
<dbReference type="OrthoDB" id="7735550at2759"/>
<dbReference type="PhylomeDB" id="P57756"/>
<dbReference type="TreeFam" id="TF329953"/>
<dbReference type="Reactome" id="R-RNO-166662">
    <property type="pathway name" value="Lectin pathway of complement activation"/>
</dbReference>
<dbReference type="Reactome" id="R-RNO-166663">
    <property type="pathway name" value="Initial triggering of complement"/>
</dbReference>
<dbReference type="Reactome" id="R-RNO-2855086">
    <property type="pathway name" value="Ficolins bind to repetitive carbohydrate structures on the target cell surface"/>
</dbReference>
<dbReference type="Reactome" id="R-RNO-6798695">
    <property type="pathway name" value="Neutrophil degranulation"/>
</dbReference>
<dbReference type="PRO" id="PR:P57756"/>
<dbReference type="Proteomes" id="UP000002494">
    <property type="component" value="Chromosome 3"/>
</dbReference>
<dbReference type="Bgee" id="ENSRNOG00000009342">
    <property type="expression patterns" value="Expressed in spleen and 16 other cell types or tissues"/>
</dbReference>
<dbReference type="GO" id="GO:0005581">
    <property type="term" value="C:collagen trimer"/>
    <property type="evidence" value="ECO:0007669"/>
    <property type="project" value="UniProtKB-KW"/>
</dbReference>
<dbReference type="GO" id="GO:0062023">
    <property type="term" value="C:collagen-containing extracellular matrix"/>
    <property type="evidence" value="ECO:0000318"/>
    <property type="project" value="GO_Central"/>
</dbReference>
<dbReference type="GO" id="GO:0005615">
    <property type="term" value="C:extracellular space"/>
    <property type="evidence" value="ECO:0000318"/>
    <property type="project" value="GO_Central"/>
</dbReference>
<dbReference type="GO" id="GO:0005886">
    <property type="term" value="C:plasma membrane"/>
    <property type="evidence" value="ECO:0000266"/>
    <property type="project" value="RGD"/>
</dbReference>
<dbReference type="GO" id="GO:1905370">
    <property type="term" value="C:serine-type endopeptidase complex"/>
    <property type="evidence" value="ECO:0000266"/>
    <property type="project" value="RGD"/>
</dbReference>
<dbReference type="GO" id="GO:0003823">
    <property type="term" value="F:antigen binding"/>
    <property type="evidence" value="ECO:0000318"/>
    <property type="project" value="GO_Central"/>
</dbReference>
<dbReference type="GO" id="GO:0030246">
    <property type="term" value="F:carbohydrate binding"/>
    <property type="evidence" value="ECO:0007669"/>
    <property type="project" value="UniProtKB-KW"/>
</dbReference>
<dbReference type="GO" id="GO:0097367">
    <property type="term" value="F:carbohydrate derivative binding"/>
    <property type="evidence" value="ECO:0000266"/>
    <property type="project" value="RGD"/>
</dbReference>
<dbReference type="GO" id="GO:0001664">
    <property type="term" value="F:G protein-coupled receptor binding"/>
    <property type="evidence" value="ECO:0000266"/>
    <property type="project" value="RGD"/>
</dbReference>
<dbReference type="GO" id="GO:0046872">
    <property type="term" value="F:metal ion binding"/>
    <property type="evidence" value="ECO:0007669"/>
    <property type="project" value="UniProtKB-KW"/>
</dbReference>
<dbReference type="GO" id="GO:0038187">
    <property type="term" value="F:pattern recognition receptor activity"/>
    <property type="evidence" value="ECO:0000266"/>
    <property type="project" value="RGD"/>
</dbReference>
<dbReference type="GO" id="GO:0033691">
    <property type="term" value="F:sialic acid binding"/>
    <property type="evidence" value="ECO:0000266"/>
    <property type="project" value="RGD"/>
</dbReference>
<dbReference type="GO" id="GO:0005102">
    <property type="term" value="F:signaling receptor binding"/>
    <property type="evidence" value="ECO:0000318"/>
    <property type="project" value="GO_Central"/>
</dbReference>
<dbReference type="GO" id="GO:0002752">
    <property type="term" value="P:cell surface pattern recognition receptor signaling pathway"/>
    <property type="evidence" value="ECO:0000266"/>
    <property type="project" value="RGD"/>
</dbReference>
<dbReference type="GO" id="GO:0001867">
    <property type="term" value="P:complement activation, lectin pathway"/>
    <property type="evidence" value="ECO:0000266"/>
    <property type="project" value="RGD"/>
</dbReference>
<dbReference type="GO" id="GO:0007186">
    <property type="term" value="P:G protein-coupled receptor signaling pathway"/>
    <property type="evidence" value="ECO:0000266"/>
    <property type="project" value="RGD"/>
</dbReference>
<dbReference type="GO" id="GO:0046597">
    <property type="term" value="P:host-mediated suppression of symbiont invasion"/>
    <property type="evidence" value="ECO:0007669"/>
    <property type="project" value="Ensembl"/>
</dbReference>
<dbReference type="GO" id="GO:0032757">
    <property type="term" value="P:positive regulation of interleukin-8 production"/>
    <property type="evidence" value="ECO:0000266"/>
    <property type="project" value="RGD"/>
</dbReference>
<dbReference type="GO" id="GO:1903028">
    <property type="term" value="P:positive regulation of opsonization"/>
    <property type="evidence" value="ECO:0000266"/>
    <property type="project" value="RGD"/>
</dbReference>
<dbReference type="GO" id="GO:0034394">
    <property type="term" value="P:protein localization to cell surface"/>
    <property type="evidence" value="ECO:0000266"/>
    <property type="project" value="RGD"/>
</dbReference>
<dbReference type="GO" id="GO:0006508">
    <property type="term" value="P:proteolysis"/>
    <property type="evidence" value="ECO:0000266"/>
    <property type="project" value="RGD"/>
</dbReference>
<dbReference type="GO" id="GO:0043654">
    <property type="term" value="P:recognition of apoptotic cell"/>
    <property type="evidence" value="ECO:0000266"/>
    <property type="project" value="RGD"/>
</dbReference>
<dbReference type="CDD" id="cd00087">
    <property type="entry name" value="FReD"/>
    <property type="match status" value="1"/>
</dbReference>
<dbReference type="FunFam" id="3.90.215.10:FF:000001">
    <property type="entry name" value="Tenascin isoform 1"/>
    <property type="match status" value="1"/>
</dbReference>
<dbReference type="Gene3D" id="3.90.215.10">
    <property type="entry name" value="Gamma Fibrinogen, chain A, domain 1"/>
    <property type="match status" value="1"/>
</dbReference>
<dbReference type="InterPro" id="IPR008160">
    <property type="entry name" value="Collagen"/>
</dbReference>
<dbReference type="InterPro" id="IPR036056">
    <property type="entry name" value="Fibrinogen-like_C"/>
</dbReference>
<dbReference type="InterPro" id="IPR014716">
    <property type="entry name" value="Fibrinogen_a/b/g_C_1"/>
</dbReference>
<dbReference type="InterPro" id="IPR002181">
    <property type="entry name" value="Fibrinogen_a/b/g_C_dom"/>
</dbReference>
<dbReference type="InterPro" id="IPR050373">
    <property type="entry name" value="Fibrinogen_C-term_domain"/>
</dbReference>
<dbReference type="InterPro" id="IPR020837">
    <property type="entry name" value="Fibrinogen_CS"/>
</dbReference>
<dbReference type="NCBIfam" id="NF040941">
    <property type="entry name" value="GGGWT_bact"/>
    <property type="match status" value="1"/>
</dbReference>
<dbReference type="PANTHER" id="PTHR19143">
    <property type="entry name" value="FIBRINOGEN/TENASCIN/ANGIOPOEITIN"/>
    <property type="match status" value="1"/>
</dbReference>
<dbReference type="PANTHER" id="PTHR19143:SF433">
    <property type="entry name" value="FICOLIN-2"/>
    <property type="match status" value="1"/>
</dbReference>
<dbReference type="Pfam" id="PF01391">
    <property type="entry name" value="Collagen"/>
    <property type="match status" value="1"/>
</dbReference>
<dbReference type="Pfam" id="PF00147">
    <property type="entry name" value="Fibrinogen_C"/>
    <property type="match status" value="1"/>
</dbReference>
<dbReference type="SMART" id="SM00186">
    <property type="entry name" value="FBG"/>
    <property type="match status" value="1"/>
</dbReference>
<dbReference type="SUPFAM" id="SSF56496">
    <property type="entry name" value="Fibrinogen C-terminal domain-like"/>
    <property type="match status" value="1"/>
</dbReference>
<dbReference type="PROSITE" id="PS00514">
    <property type="entry name" value="FIBRINOGEN_C_1"/>
    <property type="match status" value="1"/>
</dbReference>
<dbReference type="PROSITE" id="PS51406">
    <property type="entry name" value="FIBRINOGEN_C_2"/>
    <property type="match status" value="1"/>
</dbReference>
<reference key="1">
    <citation type="submission" date="2000-01" db="EMBL/GenBank/DDBJ databases">
        <title>Molecular cloning of rat ficolin B.</title>
        <authorList>
            <person name="Tachikawa H."/>
            <person name="Fujimori Y."/>
            <person name="Yoshida Y."/>
            <person name="Harumiya S."/>
            <person name="Takahashi N."/>
            <person name="Fujimoto D."/>
        </authorList>
    </citation>
    <scope>NUCLEOTIDE SEQUENCE [MRNA]</scope>
    <source>
        <strain>Sprague-Dawley</strain>
    </source>
</reference>
<reference key="2">
    <citation type="journal article" date="2004" name="Genome Res.">
        <title>The status, quality, and expansion of the NIH full-length cDNA project: the Mammalian Gene Collection (MGC).</title>
        <authorList>
            <consortium name="The MGC Project Team"/>
        </authorList>
    </citation>
    <scope>NUCLEOTIDE SEQUENCE [LARGE SCALE MRNA]</scope>
    <source>
        <tissue>Spleen</tissue>
    </source>
</reference>
<name>FCN2_RAT</name>
<keyword id="KW-0106">Calcium</keyword>
<keyword id="KW-0176">Collagen</keyword>
<keyword id="KW-1018">Complement activation lectin pathway</keyword>
<keyword id="KW-1015">Disulfide bond</keyword>
<keyword id="KW-0325">Glycoprotein</keyword>
<keyword id="KW-0391">Immunity</keyword>
<keyword id="KW-0399">Innate immunity</keyword>
<keyword id="KW-0430">Lectin</keyword>
<keyword id="KW-0479">Metal-binding</keyword>
<keyword id="KW-1185">Reference proteome</keyword>
<keyword id="KW-0677">Repeat</keyword>
<keyword id="KW-0964">Secreted</keyword>
<keyword id="KW-0732">Signal</keyword>
<evidence type="ECO:0000250" key="1"/>
<evidence type="ECO:0000250" key="2">
    <source>
        <dbReference type="UniProtKB" id="O00602"/>
    </source>
</evidence>
<evidence type="ECO:0000250" key="3">
    <source>
        <dbReference type="UniProtKB" id="Q15485"/>
    </source>
</evidence>
<evidence type="ECO:0000255" key="4"/>
<evidence type="ECO:0000255" key="5">
    <source>
        <dbReference type="PROSITE-ProRule" id="PRU00739"/>
    </source>
</evidence>
<evidence type="ECO:0000256" key="6">
    <source>
        <dbReference type="SAM" id="MobiDB-lite"/>
    </source>
</evidence>
<evidence type="ECO:0000305" key="7"/>
<sequence>MVLGSAALFVLSLCVTELTLHAADTCPEVKVLDLEGSNKLTILQGCPGLPGALGPKGEAGAKGDRGESGLPGHPGKAGPTGPKGDRGEKGVRGEKGDTGPSQSCATGPRTCKELLTRGYFLTGWYTIYLPDCRPLTVLCDMDTDGGGWTVFQRRIDGTVDFFRDWTSYKQGFGSQLGEFWLGNDNIHALTTQGTNELRVDLADFDGNHDFAKYSSFQIQGEAEKYKLILGNFLGGGAGDSLTSQNNMLFSTKDQDNDQGSSNCAVRYHGAWWYSDCHTSNLNGLYLRGLHKSYANGVNWKSWKGYNYSYKVSEMKVRLI</sequence>
<proteinExistence type="evidence at transcript level"/>
<comment type="function">
    <text evidence="3">May function in innate immunity through activation of the lectin complement pathway. Calcium-dependent and GlcNAc-binding lectin (By similarity).</text>
</comment>
<comment type="subunit">
    <text evidence="3">Homotrimer. Interacts with elastin. Interacts with MASP1 and MASP2.</text>
</comment>
<comment type="subcellular location">
    <subcellularLocation>
        <location evidence="1">Secreted</location>
    </subcellularLocation>
</comment>
<comment type="domain">
    <text evidence="3">The fibrinogen-like domain (FBG) contains calcium-binding sites that may be involved in carbohydrate binding.</text>
</comment>
<comment type="similarity">
    <text evidence="7">Belongs to the ficolin lectin family.</text>
</comment>
<feature type="signal peptide" evidence="4">
    <location>
        <begin position="1"/>
        <end position="22"/>
    </location>
</feature>
<feature type="chain" id="PRO_0000009141" description="Ficolin-2">
    <location>
        <begin position="23"/>
        <end position="319"/>
    </location>
</feature>
<feature type="domain" description="Collagen-like">
    <location>
        <begin position="45"/>
        <end position="101"/>
    </location>
</feature>
<feature type="domain" description="Fibrinogen C-terminal" evidence="5">
    <location>
        <begin position="102"/>
        <end position="319"/>
    </location>
</feature>
<feature type="region of interest" description="Disordered" evidence="6">
    <location>
        <begin position="53"/>
        <end position="106"/>
    </location>
</feature>
<feature type="compositionally biased region" description="Basic and acidic residues" evidence="6">
    <location>
        <begin position="83"/>
        <end position="97"/>
    </location>
</feature>
<feature type="binding site" evidence="2">
    <location>
        <position position="255"/>
    </location>
    <ligand>
        <name>Ca(2+)</name>
        <dbReference type="ChEBI" id="CHEBI:29108"/>
    </ligand>
</feature>
<feature type="binding site" evidence="2">
    <location>
        <position position="257"/>
    </location>
    <ligand>
        <name>Ca(2+)</name>
        <dbReference type="ChEBI" id="CHEBI:29108"/>
    </ligand>
</feature>
<feature type="binding site" evidence="2">
    <location>
        <position position="261"/>
    </location>
    <ligand>
        <name>Ca(2+)</name>
        <dbReference type="ChEBI" id="CHEBI:29108"/>
    </ligand>
</feature>
<feature type="glycosylation site" description="N-linked (GlcNAc...) asparagine" evidence="4">
    <location>
        <position position="306"/>
    </location>
</feature>
<feature type="disulfide bond" evidence="2">
    <location>
        <begin position="104"/>
        <end position="132"/>
    </location>
</feature>
<feature type="disulfide bond" evidence="2">
    <location>
        <begin position="111"/>
        <end position="139"/>
    </location>
</feature>
<feature type="disulfide bond" evidence="2">
    <location>
        <begin position="263"/>
        <end position="276"/>
    </location>
</feature>
<accession>P57756</accession>
<gene>
    <name type="primary">Fcn2</name>
    <name type="synonym">Fcnb</name>
</gene>
<protein>
    <recommendedName>
        <fullName>Ficolin-2</fullName>
    </recommendedName>
    <alternativeName>
        <fullName>Collagen/fibrinogen domain-containing protein 2</fullName>
    </alternativeName>
    <alternativeName>
        <fullName>Ficolin-B</fullName>
    </alternativeName>
    <alternativeName>
        <fullName>Ficolin-beta</fullName>
    </alternativeName>
    <alternativeName>
        <fullName>L-ficolin</fullName>
    </alternativeName>
</protein>